<sequence length="496" mass="55439">MPQLHDSGSRAIQPSDQTHQHDFARIFGIETEYGVSVTDIPEPMDASHVAMTMFQPVVRRARSTNTYVENGSRLYLDVGSHPEYATAEAICPSDALLSDLAGEQTMRSMGLDAQRRLRESDAQNRHATLHLYKNNADSAGHSFGCHENYLVRRFVNLDMIQHVLLPFLITRQIYTGAGRFDGERLLFTQRAAFVDETVSSATTRSRPMINTRDEPHANPDDYRRLHVIIGDSNRSQWATLMKCATTHLVLCMMEHAARSGCETELEAFALADPIAANHAINTDGAHARIALAAGRSTTALELQQMMLEQVESFAAHHGDALEASLRYDALCNVEWIVGQWRWVLDRLAANDIETLSHVVDWASKQVFFNRLQSRGTVTPARLRQLDLDYHDIANGRLYPSLCAHGLMRTLVDADQIHDAVSTPPPHTRAVLRGRFVAAASHTDAVYDCDWTTLKLVRPVHMEAVLLDPFHDEPTKQYDKLMGELGDARADGDEAPV</sequence>
<accession>C6A7B6</accession>
<gene>
    <name evidence="1" type="primary">pafA</name>
    <name type="ordered locus">Balac_0641</name>
</gene>
<reference key="1">
    <citation type="journal article" date="2009" name="J. Bacteriol.">
        <title>Comparison of the complete genome sequences of Bifidobacterium animalis subsp. lactis DSM 10140 and Bl-04.</title>
        <authorList>
            <person name="Barrangou R."/>
            <person name="Briczinski E.P."/>
            <person name="Traeger L.L."/>
            <person name="Loquasto J.R."/>
            <person name="Richards M."/>
            <person name="Horvath P."/>
            <person name="Coute-Monvoisin A.-C."/>
            <person name="Leyer G."/>
            <person name="Rendulic S."/>
            <person name="Steele J.L."/>
            <person name="Broadbent J.R."/>
            <person name="Oberg T."/>
            <person name="Dudley E.G."/>
            <person name="Schuster S."/>
            <person name="Romero D.A."/>
            <person name="Roberts R.F."/>
        </authorList>
    </citation>
    <scope>NUCLEOTIDE SEQUENCE [LARGE SCALE GENOMIC DNA]</scope>
    <source>
        <strain>Bl-04 / DGCC2908 / RB 4825 / SD5219</strain>
    </source>
</reference>
<comment type="function">
    <text evidence="1">Catalyzes the covalent attachment of the prokaryotic ubiquitin-like protein modifier Pup to the proteasomal substrate proteins, thereby targeting them for proteasomal degradation. This tagging system is termed pupylation. The ligation reaction involves the side-chain carboxylate of the C-terminal glutamate of Pup and the side-chain amino group of a substrate lysine.</text>
</comment>
<comment type="catalytic activity">
    <reaction evidence="1">
        <text>ATP + [prokaryotic ubiquitin-like protein]-L-glutamate + [protein]-L-lysine = ADP + phosphate + N(6)-([prokaryotic ubiquitin-like protein]-gamma-L-glutamyl)-[protein]-L-lysine.</text>
        <dbReference type="EC" id="6.3.1.19"/>
    </reaction>
</comment>
<comment type="pathway">
    <text evidence="1">Protein degradation; proteasomal Pup-dependent pathway.</text>
</comment>
<comment type="pathway">
    <text evidence="1">Protein modification; protein pupylation.</text>
</comment>
<comment type="miscellaneous">
    <text evidence="1">The reaction mechanism probably proceeds via the activation of Pup by phosphorylation of its C-terminal glutamate, which is then subject to nucleophilic attack by the substrate lysine, resulting in an isopeptide bond and the release of phosphate as a good leaving group.</text>
</comment>
<comment type="similarity">
    <text evidence="1">Belongs to the Pup ligase/Pup deamidase family. Pup-conjugating enzyme subfamily.</text>
</comment>
<organism>
    <name type="scientific">Bifidobacterium animalis subsp. lactis (strain Bl-04 / DGCC2908 / RB 4825 / SD5219)</name>
    <dbReference type="NCBI Taxonomy" id="580050"/>
    <lineage>
        <taxon>Bacteria</taxon>
        <taxon>Bacillati</taxon>
        <taxon>Actinomycetota</taxon>
        <taxon>Actinomycetes</taxon>
        <taxon>Bifidobacteriales</taxon>
        <taxon>Bifidobacteriaceae</taxon>
        <taxon>Bifidobacterium</taxon>
    </lineage>
</organism>
<dbReference type="EC" id="6.3.1.19" evidence="1"/>
<dbReference type="EMBL" id="CP001515">
    <property type="protein sequence ID" value="ACS46014.1"/>
    <property type="molecule type" value="Genomic_DNA"/>
</dbReference>
<dbReference type="RefSeq" id="WP_004218911.1">
    <property type="nucleotide sequence ID" value="NC_012814.1"/>
</dbReference>
<dbReference type="SMR" id="C6A7B6"/>
<dbReference type="KEGG" id="blc:Balac_0641"/>
<dbReference type="PATRIC" id="fig|442563.4.peg.1227"/>
<dbReference type="HOGENOM" id="CLU_040524_0_1_11"/>
<dbReference type="UniPathway" id="UPA00997"/>
<dbReference type="UniPathway" id="UPA00998"/>
<dbReference type="GO" id="GO:0005524">
    <property type="term" value="F:ATP binding"/>
    <property type="evidence" value="ECO:0007669"/>
    <property type="project" value="UniProtKB-UniRule"/>
</dbReference>
<dbReference type="GO" id="GO:0016879">
    <property type="term" value="F:ligase activity, forming carbon-nitrogen bonds"/>
    <property type="evidence" value="ECO:0007669"/>
    <property type="project" value="InterPro"/>
</dbReference>
<dbReference type="GO" id="GO:0000287">
    <property type="term" value="F:magnesium ion binding"/>
    <property type="evidence" value="ECO:0007669"/>
    <property type="project" value="UniProtKB-UniRule"/>
</dbReference>
<dbReference type="GO" id="GO:0019787">
    <property type="term" value="F:ubiquitin-like protein transferase activity"/>
    <property type="evidence" value="ECO:0007669"/>
    <property type="project" value="UniProtKB-UniRule"/>
</dbReference>
<dbReference type="GO" id="GO:0019941">
    <property type="term" value="P:modification-dependent protein catabolic process"/>
    <property type="evidence" value="ECO:0007669"/>
    <property type="project" value="UniProtKB-UniRule"/>
</dbReference>
<dbReference type="GO" id="GO:0010498">
    <property type="term" value="P:proteasomal protein catabolic process"/>
    <property type="evidence" value="ECO:0007669"/>
    <property type="project" value="UniProtKB-UniRule"/>
</dbReference>
<dbReference type="GO" id="GO:0070490">
    <property type="term" value="P:protein pupylation"/>
    <property type="evidence" value="ECO:0007669"/>
    <property type="project" value="UniProtKB-UniRule"/>
</dbReference>
<dbReference type="HAMAP" id="MF_02111">
    <property type="entry name" value="Pup_ligase"/>
    <property type="match status" value="1"/>
</dbReference>
<dbReference type="InterPro" id="IPR022279">
    <property type="entry name" value="Pup_ligase"/>
</dbReference>
<dbReference type="InterPro" id="IPR004347">
    <property type="entry name" value="Pup_ligase/deamidase"/>
</dbReference>
<dbReference type="PANTHER" id="PTHR42307">
    <property type="entry name" value="PUP DEAMIDASE/DEPUPYLASE"/>
    <property type="match status" value="1"/>
</dbReference>
<dbReference type="PANTHER" id="PTHR42307:SF3">
    <property type="entry name" value="PUP--PROTEIN LIGASE"/>
    <property type="match status" value="1"/>
</dbReference>
<dbReference type="Pfam" id="PF03136">
    <property type="entry name" value="Pup_ligase"/>
    <property type="match status" value="1"/>
</dbReference>
<keyword id="KW-0067">ATP-binding</keyword>
<keyword id="KW-0436">Ligase</keyword>
<keyword id="KW-0460">Magnesium</keyword>
<keyword id="KW-0479">Metal-binding</keyword>
<keyword id="KW-0547">Nucleotide-binding</keyword>
<keyword id="KW-0833">Ubl conjugation pathway</keyword>
<name>PAFA_BIFLB</name>
<evidence type="ECO:0000255" key="1">
    <source>
        <dbReference type="HAMAP-Rule" id="MF_02111"/>
    </source>
</evidence>
<proteinExistence type="inferred from homology"/>
<feature type="chain" id="PRO_0000395897" description="Pup--protein ligase">
    <location>
        <begin position="1"/>
        <end position="496"/>
    </location>
</feature>
<feature type="active site" description="Proton acceptor" evidence="1">
    <location>
        <position position="77"/>
    </location>
</feature>
<feature type="binding site" evidence="1">
    <location>
        <position position="30"/>
    </location>
    <ligand>
        <name>Mg(2+)</name>
        <dbReference type="ChEBI" id="CHEBI:18420"/>
    </ligand>
</feature>
<feature type="binding site" evidence="1">
    <location>
        <position position="73"/>
    </location>
    <ligand>
        <name>ATP</name>
        <dbReference type="ChEBI" id="CHEBI:30616"/>
    </ligand>
</feature>
<feature type="binding site" evidence="1">
    <location>
        <position position="75"/>
    </location>
    <ligand>
        <name>Mg(2+)</name>
        <dbReference type="ChEBI" id="CHEBI:18420"/>
    </ligand>
</feature>
<feature type="binding site" evidence="1">
    <location>
        <position position="83"/>
    </location>
    <ligand>
        <name>Mg(2+)</name>
        <dbReference type="ChEBI" id="CHEBI:18420"/>
    </ligand>
</feature>
<feature type="binding site" evidence="1">
    <location>
        <position position="86"/>
    </location>
    <ligand>
        <name>ATP</name>
        <dbReference type="ChEBI" id="CHEBI:30616"/>
    </ligand>
</feature>
<feature type="binding site" evidence="1">
    <location>
        <position position="450"/>
    </location>
    <ligand>
        <name>ATP</name>
        <dbReference type="ChEBI" id="CHEBI:30616"/>
    </ligand>
</feature>
<protein>
    <recommendedName>
        <fullName evidence="1">Pup--protein ligase</fullName>
        <ecNumber evidence="1">6.3.1.19</ecNumber>
    </recommendedName>
    <alternativeName>
        <fullName evidence="1">Proteasome accessory factor A</fullName>
    </alternativeName>
    <alternativeName>
        <fullName evidence="1">Pup-conjugating enzyme</fullName>
    </alternativeName>
</protein>